<keyword id="KW-0217">Developmental protein</keyword>
<keyword id="KW-0539">Nucleus</keyword>
<keyword id="KW-0597">Phosphoprotein</keyword>
<keyword id="KW-1185">Reference proteome</keyword>
<keyword id="KW-0804">Transcription</keyword>
<keyword id="KW-0805">Transcription regulation</keyword>
<proteinExistence type="inferred from homology"/>
<sequence length="297" mass="32645">MEPSGSKKGRAEEPREEVECQMSSQPSTSSAKTKATGKKQRKSEKDDGCKPEEKSAQDPETPGHARRKVPVPPFPQHLPPVNLIHRDVLRAWCQEMKLSSKGQKLDAYKRLLARAFPDQMPELKNVPDSAKEARLKMPRKKMKTEPGEESQVTVPLEIVTVPEEQIPALVDPPVLYEEVSTTVVTTSASEAVLASWARIAANAKKLEAVPSNATSETYGSTGEMWCVVHGTSLPATSSGWVRLQFHAGQAWVPDKKGKAIALFLLPACTFPPPHLEDNMLCPKCVHKNKILTKSLEG</sequence>
<dbReference type="FunCoup" id="D3Z8Y2">
    <property type="interactions" value="36"/>
</dbReference>
<dbReference type="STRING" id="10116.ENSRNOP00000062176"/>
<dbReference type="PhosphoSitePlus" id="D3Z8Y2"/>
<dbReference type="PaxDb" id="10116-ENSRNOP00000062176"/>
<dbReference type="PeptideAtlas" id="D3Z8Y2"/>
<dbReference type="AGR" id="RGD:1595070"/>
<dbReference type="RGD" id="1595070">
    <property type="gene designation" value="Dppa4"/>
</dbReference>
<dbReference type="eggNOG" id="ENOG502R0CF">
    <property type="taxonomic scope" value="Eukaryota"/>
</dbReference>
<dbReference type="InParanoid" id="D3Z8Y2"/>
<dbReference type="PRO" id="PR:D3Z8Y2"/>
<dbReference type="Proteomes" id="UP000002494">
    <property type="component" value="Unplaced"/>
</dbReference>
<dbReference type="GO" id="GO:0005634">
    <property type="term" value="C:nucleus"/>
    <property type="evidence" value="ECO:0000266"/>
    <property type="project" value="RGD"/>
</dbReference>
<dbReference type="GO" id="GO:0003682">
    <property type="term" value="F:chromatin binding"/>
    <property type="evidence" value="ECO:0000318"/>
    <property type="project" value="GO_Central"/>
</dbReference>
<dbReference type="GO" id="GO:0060484">
    <property type="term" value="P:lung-associated mesenchyme development"/>
    <property type="evidence" value="ECO:0000266"/>
    <property type="project" value="RGD"/>
</dbReference>
<dbReference type="GO" id="GO:0048731">
    <property type="term" value="P:system development"/>
    <property type="evidence" value="ECO:0000318"/>
    <property type="project" value="GO_Central"/>
</dbReference>
<dbReference type="InterPro" id="IPR039590">
    <property type="entry name" value="Dppa2/4"/>
</dbReference>
<dbReference type="InterPro" id="IPR025891">
    <property type="entry name" value="Dppa2/4_C_dom"/>
</dbReference>
<dbReference type="InterPro" id="IPR025892">
    <property type="entry name" value="Dppa2/4_central_dom"/>
</dbReference>
<dbReference type="PANTHER" id="PTHR16073">
    <property type="entry name" value="DCR DOMAIN-CONTAINING PROTEIN"/>
    <property type="match status" value="1"/>
</dbReference>
<dbReference type="PANTHER" id="PTHR16073:SF8">
    <property type="entry name" value="DEVELOPMENTAL PLURIPOTENCY-ASSOCIATED PROTEIN 4"/>
    <property type="match status" value="1"/>
</dbReference>
<dbReference type="Pfam" id="PF14047">
    <property type="entry name" value="DCR"/>
    <property type="match status" value="1"/>
</dbReference>
<dbReference type="Pfam" id="PF14049">
    <property type="entry name" value="Dppa2_A"/>
    <property type="match status" value="2"/>
</dbReference>
<name>DPPA4_RAT</name>
<protein>
    <recommendedName>
        <fullName>Developmental pluripotency-associated protein 4</fullName>
    </recommendedName>
</protein>
<gene>
    <name type="primary">Dppa4</name>
</gene>
<reference key="1">
    <citation type="journal article" date="2004" name="Nature">
        <title>Genome sequence of the Brown Norway rat yields insights into mammalian evolution.</title>
        <authorList>
            <person name="Gibbs R.A."/>
            <person name="Weinstock G.M."/>
            <person name="Metzker M.L."/>
            <person name="Muzny D.M."/>
            <person name="Sodergren E.J."/>
            <person name="Scherer S."/>
            <person name="Scott G."/>
            <person name="Steffen D."/>
            <person name="Worley K.C."/>
            <person name="Burch P.E."/>
            <person name="Okwuonu G."/>
            <person name="Hines S."/>
            <person name="Lewis L."/>
            <person name="Deramo C."/>
            <person name="Delgado O."/>
            <person name="Dugan-Rocha S."/>
            <person name="Miner G."/>
            <person name="Morgan M."/>
            <person name="Hawes A."/>
            <person name="Gill R."/>
            <person name="Holt R.A."/>
            <person name="Adams M.D."/>
            <person name="Amanatides P.G."/>
            <person name="Baden-Tillson H."/>
            <person name="Barnstead M."/>
            <person name="Chin S."/>
            <person name="Evans C.A."/>
            <person name="Ferriera S."/>
            <person name="Fosler C."/>
            <person name="Glodek A."/>
            <person name="Gu Z."/>
            <person name="Jennings D."/>
            <person name="Kraft C.L."/>
            <person name="Nguyen T."/>
            <person name="Pfannkoch C.M."/>
            <person name="Sitter C."/>
            <person name="Sutton G.G."/>
            <person name="Venter J.C."/>
            <person name="Woodage T."/>
            <person name="Smith D."/>
            <person name="Lee H.-M."/>
            <person name="Gustafson E."/>
            <person name="Cahill P."/>
            <person name="Kana A."/>
            <person name="Doucette-Stamm L."/>
            <person name="Weinstock K."/>
            <person name="Fechtel K."/>
            <person name="Weiss R.B."/>
            <person name="Dunn D.M."/>
            <person name="Green E.D."/>
            <person name="Blakesley R.W."/>
            <person name="Bouffard G.G."/>
            <person name="De Jong P.J."/>
            <person name="Osoegawa K."/>
            <person name="Zhu B."/>
            <person name="Marra M."/>
            <person name="Schein J."/>
            <person name="Bosdet I."/>
            <person name="Fjell C."/>
            <person name="Jones S."/>
            <person name="Krzywinski M."/>
            <person name="Mathewson C."/>
            <person name="Siddiqui A."/>
            <person name="Wye N."/>
            <person name="McPherson J."/>
            <person name="Zhao S."/>
            <person name="Fraser C.M."/>
            <person name="Shetty J."/>
            <person name="Shatsman S."/>
            <person name="Geer K."/>
            <person name="Chen Y."/>
            <person name="Abramzon S."/>
            <person name="Nierman W.C."/>
            <person name="Havlak P.H."/>
            <person name="Chen R."/>
            <person name="Durbin K.J."/>
            <person name="Egan A."/>
            <person name="Ren Y."/>
            <person name="Song X.-Z."/>
            <person name="Li B."/>
            <person name="Liu Y."/>
            <person name="Qin X."/>
            <person name="Cawley S."/>
            <person name="Cooney A.J."/>
            <person name="D'Souza L.M."/>
            <person name="Martin K."/>
            <person name="Wu J.Q."/>
            <person name="Gonzalez-Garay M.L."/>
            <person name="Jackson A.R."/>
            <person name="Kalafus K.J."/>
            <person name="McLeod M.P."/>
            <person name="Milosavljevic A."/>
            <person name="Virk D."/>
            <person name="Volkov A."/>
            <person name="Wheeler D.A."/>
            <person name="Zhang Z."/>
            <person name="Bailey J.A."/>
            <person name="Eichler E.E."/>
            <person name="Tuzun E."/>
            <person name="Birney E."/>
            <person name="Mongin E."/>
            <person name="Ureta-Vidal A."/>
            <person name="Woodwark C."/>
            <person name="Zdobnov E."/>
            <person name="Bork P."/>
            <person name="Suyama M."/>
            <person name="Torrents D."/>
            <person name="Alexandersson M."/>
            <person name="Trask B.J."/>
            <person name="Young J.M."/>
            <person name="Huang H."/>
            <person name="Wang H."/>
            <person name="Xing H."/>
            <person name="Daniels S."/>
            <person name="Gietzen D."/>
            <person name="Schmidt J."/>
            <person name="Stevens K."/>
            <person name="Vitt U."/>
            <person name="Wingrove J."/>
            <person name="Camara F."/>
            <person name="Mar Alba M."/>
            <person name="Abril J.F."/>
            <person name="Guigo R."/>
            <person name="Smit A."/>
            <person name="Dubchak I."/>
            <person name="Rubin E.M."/>
            <person name="Couronne O."/>
            <person name="Poliakov A."/>
            <person name="Huebner N."/>
            <person name="Ganten D."/>
            <person name="Goesele C."/>
            <person name="Hummel O."/>
            <person name="Kreitler T."/>
            <person name="Lee Y.-A."/>
            <person name="Monti J."/>
            <person name="Schulz H."/>
            <person name="Zimdahl H."/>
            <person name="Himmelbauer H."/>
            <person name="Lehrach H."/>
            <person name="Jacob H.J."/>
            <person name="Bromberg S."/>
            <person name="Gullings-Handley J."/>
            <person name="Jensen-Seaman M.I."/>
            <person name="Kwitek A.E."/>
            <person name="Lazar J."/>
            <person name="Pasko D."/>
            <person name="Tonellato P.J."/>
            <person name="Twigger S."/>
            <person name="Ponting C.P."/>
            <person name="Duarte J.M."/>
            <person name="Rice S."/>
            <person name="Goodstadt L."/>
            <person name="Beatson S.A."/>
            <person name="Emes R.D."/>
            <person name="Winter E.E."/>
            <person name="Webber C."/>
            <person name="Brandt P."/>
            <person name="Nyakatura G."/>
            <person name="Adetobi M."/>
            <person name="Chiaromonte F."/>
            <person name="Elnitski L."/>
            <person name="Eswara P."/>
            <person name="Hardison R.C."/>
            <person name="Hou M."/>
            <person name="Kolbe D."/>
            <person name="Makova K."/>
            <person name="Miller W."/>
            <person name="Nekrutenko A."/>
            <person name="Riemer C."/>
            <person name="Schwartz S."/>
            <person name="Taylor J."/>
            <person name="Yang S."/>
            <person name="Zhang Y."/>
            <person name="Lindpaintner K."/>
            <person name="Andrews T.D."/>
            <person name="Caccamo M."/>
            <person name="Clamp M."/>
            <person name="Clarke L."/>
            <person name="Curwen V."/>
            <person name="Durbin R.M."/>
            <person name="Eyras E."/>
            <person name="Searle S.M."/>
            <person name="Cooper G.M."/>
            <person name="Batzoglou S."/>
            <person name="Brudno M."/>
            <person name="Sidow A."/>
            <person name="Stone E.A."/>
            <person name="Payseur B.A."/>
            <person name="Bourque G."/>
            <person name="Lopez-Otin C."/>
            <person name="Puente X.S."/>
            <person name="Chakrabarti K."/>
            <person name="Chatterji S."/>
            <person name="Dewey C."/>
            <person name="Pachter L."/>
            <person name="Bray N."/>
            <person name="Yap V.B."/>
            <person name="Caspi A."/>
            <person name="Tesler G."/>
            <person name="Pevzner P.A."/>
            <person name="Haussler D."/>
            <person name="Roskin K.M."/>
            <person name="Baertsch R."/>
            <person name="Clawson H."/>
            <person name="Furey T.S."/>
            <person name="Hinrichs A.S."/>
            <person name="Karolchik D."/>
            <person name="Kent W.J."/>
            <person name="Rosenbloom K.R."/>
            <person name="Trumbower H."/>
            <person name="Weirauch M."/>
            <person name="Cooper D.N."/>
            <person name="Stenson P.D."/>
            <person name="Ma B."/>
            <person name="Brent M."/>
            <person name="Arumugam M."/>
            <person name="Shteynberg D."/>
            <person name="Copley R.R."/>
            <person name="Taylor M.S."/>
            <person name="Riethman H."/>
            <person name="Mudunuri U."/>
            <person name="Peterson J."/>
            <person name="Guyer M."/>
            <person name="Felsenfeld A."/>
            <person name="Old S."/>
            <person name="Mockrin S."/>
            <person name="Collins F.S."/>
        </authorList>
    </citation>
    <scope>NUCLEOTIDE SEQUENCE [LARGE SCALE GENOMIC DNA]</scope>
    <source>
        <strain>Brown Norway</strain>
    </source>
</reference>
<evidence type="ECO:0000250" key="1">
    <source>
        <dbReference type="UniProtKB" id="Q7L190"/>
    </source>
</evidence>
<evidence type="ECO:0000250" key="2">
    <source>
        <dbReference type="UniProtKB" id="Q8CCG4"/>
    </source>
</evidence>
<evidence type="ECO:0000256" key="3">
    <source>
        <dbReference type="SAM" id="MobiDB-lite"/>
    </source>
</evidence>
<accession>D3Z8Y2</accession>
<comment type="function">
    <text evidence="2">May be involved in the maintenance of active epigenetic status of target genes. May inhibit differentiation of embryonic stem (ES) cells into a primitive ectoderm lineage (By similarity).</text>
</comment>
<comment type="subunit">
    <text evidence="1 2">Interacts with DPPA2. Interacts with PCGF1.</text>
</comment>
<comment type="subcellular location">
    <subcellularLocation>
        <location evidence="2">Nucleus</location>
    </subcellularLocation>
    <text evidence="2">Associated with transcriptionally active chromatin.</text>
</comment>
<organism>
    <name type="scientific">Rattus norvegicus</name>
    <name type="common">Rat</name>
    <dbReference type="NCBI Taxonomy" id="10116"/>
    <lineage>
        <taxon>Eukaryota</taxon>
        <taxon>Metazoa</taxon>
        <taxon>Chordata</taxon>
        <taxon>Craniata</taxon>
        <taxon>Vertebrata</taxon>
        <taxon>Euteleostomi</taxon>
        <taxon>Mammalia</taxon>
        <taxon>Eutheria</taxon>
        <taxon>Euarchontoglires</taxon>
        <taxon>Glires</taxon>
        <taxon>Rodentia</taxon>
        <taxon>Myomorpha</taxon>
        <taxon>Muroidea</taxon>
        <taxon>Muridae</taxon>
        <taxon>Murinae</taxon>
        <taxon>Rattus</taxon>
    </lineage>
</organism>
<feature type="chain" id="PRO_0000416465" description="Developmental pluripotency-associated protein 4">
    <location>
        <begin position="1"/>
        <end position="297"/>
    </location>
</feature>
<feature type="region of interest" description="Disordered" evidence="3">
    <location>
        <begin position="1"/>
        <end position="77"/>
    </location>
</feature>
<feature type="compositionally biased region" description="Low complexity" evidence="3">
    <location>
        <begin position="23"/>
        <end position="34"/>
    </location>
</feature>
<feature type="compositionally biased region" description="Basic and acidic residues" evidence="3">
    <location>
        <begin position="43"/>
        <end position="63"/>
    </location>
</feature>
<feature type="modified residue" description="Phosphoserine" evidence="1">
    <location>
        <position position="211"/>
    </location>
</feature>